<protein>
    <recommendedName>
        <fullName evidence="1">Diaminopimelate epimerase</fullName>
        <shortName evidence="1">DAP epimerase</shortName>
        <ecNumber evidence="1">5.1.1.7</ecNumber>
    </recommendedName>
    <alternativeName>
        <fullName evidence="1">PLP-independent amino acid racemase</fullName>
    </alternativeName>
</protein>
<keyword id="KW-0028">Amino-acid biosynthesis</keyword>
<keyword id="KW-0963">Cytoplasm</keyword>
<keyword id="KW-0413">Isomerase</keyword>
<keyword id="KW-0457">Lysine biosynthesis</keyword>
<reference key="1">
    <citation type="journal article" date="1998" name="Proc. Natl. Acad. Sci. U.S.A.">
        <title>A site-specific recombinase is required for competitive root colonization by Pseudomonas fluorescens WCS365.</title>
        <authorList>
            <person name="Dekkers L.C."/>
            <person name="Phoelich C.C."/>
            <person name="van der Fits L."/>
            <person name="Lugtenberg B.J.J."/>
        </authorList>
    </citation>
    <scope>NUCLEOTIDE SEQUENCE [GENOMIC DNA]</scope>
    <source>
        <strain>WCS365</strain>
    </source>
</reference>
<gene>
    <name evidence="1" type="primary">dapF</name>
</gene>
<dbReference type="EC" id="5.1.1.7" evidence="1"/>
<dbReference type="EMBL" id="Y12268">
    <property type="protein sequence ID" value="CAA72944.1"/>
    <property type="molecule type" value="Genomic_DNA"/>
</dbReference>
<dbReference type="PIR" id="T10459">
    <property type="entry name" value="T10459"/>
</dbReference>
<dbReference type="SMR" id="O05322"/>
<dbReference type="PATRIC" id="fig|294.126.peg.1035"/>
<dbReference type="eggNOG" id="COG0253">
    <property type="taxonomic scope" value="Bacteria"/>
</dbReference>
<dbReference type="UniPathway" id="UPA00034">
    <property type="reaction ID" value="UER00025"/>
</dbReference>
<dbReference type="GO" id="GO:0005829">
    <property type="term" value="C:cytosol"/>
    <property type="evidence" value="ECO:0007669"/>
    <property type="project" value="TreeGrafter"/>
</dbReference>
<dbReference type="GO" id="GO:0008837">
    <property type="term" value="F:diaminopimelate epimerase activity"/>
    <property type="evidence" value="ECO:0007669"/>
    <property type="project" value="UniProtKB-UniRule"/>
</dbReference>
<dbReference type="GO" id="GO:0009089">
    <property type="term" value="P:lysine biosynthetic process via diaminopimelate"/>
    <property type="evidence" value="ECO:0007669"/>
    <property type="project" value="UniProtKB-UniRule"/>
</dbReference>
<dbReference type="FunFam" id="3.10.310.10:FF:000001">
    <property type="entry name" value="Diaminopimelate epimerase"/>
    <property type="match status" value="1"/>
</dbReference>
<dbReference type="Gene3D" id="3.10.310.10">
    <property type="entry name" value="Diaminopimelate Epimerase, Chain A, domain 1"/>
    <property type="match status" value="2"/>
</dbReference>
<dbReference type="HAMAP" id="MF_00197">
    <property type="entry name" value="DAP_epimerase"/>
    <property type="match status" value="1"/>
</dbReference>
<dbReference type="InterPro" id="IPR018510">
    <property type="entry name" value="DAP_epimerase_AS"/>
</dbReference>
<dbReference type="InterPro" id="IPR001653">
    <property type="entry name" value="DAP_epimerase_DapF"/>
</dbReference>
<dbReference type="NCBIfam" id="TIGR00652">
    <property type="entry name" value="DapF"/>
    <property type="match status" value="1"/>
</dbReference>
<dbReference type="PANTHER" id="PTHR31689:SF0">
    <property type="entry name" value="DIAMINOPIMELATE EPIMERASE"/>
    <property type="match status" value="1"/>
</dbReference>
<dbReference type="PANTHER" id="PTHR31689">
    <property type="entry name" value="DIAMINOPIMELATE EPIMERASE, CHLOROPLASTIC"/>
    <property type="match status" value="1"/>
</dbReference>
<dbReference type="Pfam" id="PF01678">
    <property type="entry name" value="DAP_epimerase"/>
    <property type="match status" value="2"/>
</dbReference>
<dbReference type="SUPFAM" id="SSF54506">
    <property type="entry name" value="Diaminopimelate epimerase-like"/>
    <property type="match status" value="1"/>
</dbReference>
<dbReference type="PROSITE" id="PS01326">
    <property type="entry name" value="DAP_EPIMERASE"/>
    <property type="match status" value="1"/>
</dbReference>
<feature type="chain" id="PRO_0000149860" description="Diaminopimelate epimerase">
    <location>
        <begin position="1"/>
        <end position="276"/>
    </location>
</feature>
<feature type="active site" description="Proton donor" evidence="1">
    <location>
        <position position="75"/>
    </location>
</feature>
<feature type="active site" description="Proton acceptor" evidence="1">
    <location>
        <position position="219"/>
    </location>
</feature>
<feature type="binding site" evidence="1">
    <location>
        <position position="13"/>
    </location>
    <ligand>
        <name>substrate</name>
    </ligand>
</feature>
<feature type="binding site" evidence="1">
    <location>
        <position position="46"/>
    </location>
    <ligand>
        <name>substrate</name>
    </ligand>
</feature>
<feature type="binding site" evidence="1">
    <location>
        <position position="66"/>
    </location>
    <ligand>
        <name>substrate</name>
    </ligand>
</feature>
<feature type="binding site" evidence="1">
    <location>
        <begin position="76"/>
        <end position="77"/>
    </location>
    <ligand>
        <name>substrate</name>
    </ligand>
</feature>
<feature type="binding site" evidence="1">
    <location>
        <position position="159"/>
    </location>
    <ligand>
        <name>substrate</name>
    </ligand>
</feature>
<feature type="binding site" evidence="1">
    <location>
        <position position="192"/>
    </location>
    <ligand>
        <name>substrate</name>
    </ligand>
</feature>
<feature type="binding site" evidence="1">
    <location>
        <begin position="210"/>
        <end position="211"/>
    </location>
    <ligand>
        <name>substrate</name>
    </ligand>
</feature>
<feature type="binding site" evidence="1">
    <location>
        <begin position="220"/>
        <end position="221"/>
    </location>
    <ligand>
        <name>substrate</name>
    </ligand>
</feature>
<feature type="site" description="Could be important to modulate the pK values of the two catalytic cysteine residues" evidence="1">
    <location>
        <position position="161"/>
    </location>
</feature>
<feature type="site" description="Could be important to modulate the pK values of the two catalytic cysteine residues" evidence="1">
    <location>
        <position position="210"/>
    </location>
</feature>
<feature type="site" description="Important for dimerization" evidence="1">
    <location>
        <position position="270"/>
    </location>
</feature>
<sequence length="276" mass="30070">MLLRFTKMHGLGNDFMVLDLVSQHAHILPKHAKQWGDRHTGIGFDQLLIVEAPNNPDVDFRYRIFNADGSEVEQCGNGARCFARFVLDKRLTAKRQIRVETKSGIIELDVRSDGQIGVNMGAPRLVPADIPFQAPAQALSYQVDVDGATVELAAVSMGNPHAVLRVADINSAPVHELGPKIEHHPRFPARVNVGFLQVIDRHRAQLRVWERGAGETQACGTGACAAAVAAISQGWMDSPLLIDLPGGRLSIEWAGPGQPVMMTGPAVRVYEGQVRL</sequence>
<comment type="function">
    <text evidence="1">Catalyzes the stereoinversion of LL-2,6-diaminopimelate (L,L-DAP) to meso-diaminopimelate (meso-DAP), a precursor of L-lysine and an essential component of the bacterial peptidoglycan.</text>
</comment>
<comment type="catalytic activity">
    <reaction evidence="1">
        <text>(2S,6S)-2,6-diaminopimelate = meso-2,6-diaminopimelate</text>
        <dbReference type="Rhea" id="RHEA:15393"/>
        <dbReference type="ChEBI" id="CHEBI:57609"/>
        <dbReference type="ChEBI" id="CHEBI:57791"/>
        <dbReference type="EC" id="5.1.1.7"/>
    </reaction>
</comment>
<comment type="pathway">
    <text evidence="1">Amino-acid biosynthesis; L-lysine biosynthesis via DAP pathway; DL-2,6-diaminopimelate from LL-2,6-diaminopimelate: step 1/1.</text>
</comment>
<comment type="subunit">
    <text evidence="1">Homodimer.</text>
</comment>
<comment type="subcellular location">
    <subcellularLocation>
        <location evidence="1">Cytoplasm</location>
    </subcellularLocation>
</comment>
<comment type="similarity">
    <text evidence="1">Belongs to the diaminopimelate epimerase family.</text>
</comment>
<evidence type="ECO:0000255" key="1">
    <source>
        <dbReference type="HAMAP-Rule" id="MF_00197"/>
    </source>
</evidence>
<name>DAPF_PSEFL</name>
<organism>
    <name type="scientific">Pseudomonas fluorescens</name>
    <dbReference type="NCBI Taxonomy" id="294"/>
    <lineage>
        <taxon>Bacteria</taxon>
        <taxon>Pseudomonadati</taxon>
        <taxon>Pseudomonadota</taxon>
        <taxon>Gammaproteobacteria</taxon>
        <taxon>Pseudomonadales</taxon>
        <taxon>Pseudomonadaceae</taxon>
        <taxon>Pseudomonas</taxon>
    </lineage>
</organism>
<accession>O05322</accession>
<proteinExistence type="inferred from homology"/>